<organism>
    <name type="scientific">Methylobacterium sp. (strain 4-46)</name>
    <dbReference type="NCBI Taxonomy" id="426117"/>
    <lineage>
        <taxon>Bacteria</taxon>
        <taxon>Pseudomonadati</taxon>
        <taxon>Pseudomonadota</taxon>
        <taxon>Alphaproteobacteria</taxon>
        <taxon>Hyphomicrobiales</taxon>
        <taxon>Methylobacteriaceae</taxon>
        <taxon>Methylobacterium</taxon>
    </lineage>
</organism>
<feature type="chain" id="PRO_1000120774" description="Small ribosomal subunit protein bS6">
    <location>
        <begin position="1"/>
        <end position="134"/>
    </location>
</feature>
<feature type="region of interest" description="Disordered" evidence="2">
    <location>
        <begin position="99"/>
        <end position="134"/>
    </location>
</feature>
<feature type="compositionally biased region" description="Basic and acidic residues" evidence="2">
    <location>
        <begin position="105"/>
        <end position="134"/>
    </location>
</feature>
<accession>B0UL29</accession>
<proteinExistence type="inferred from homology"/>
<evidence type="ECO:0000255" key="1">
    <source>
        <dbReference type="HAMAP-Rule" id="MF_00360"/>
    </source>
</evidence>
<evidence type="ECO:0000256" key="2">
    <source>
        <dbReference type="SAM" id="MobiDB-lite"/>
    </source>
</evidence>
<evidence type="ECO:0000305" key="3"/>
<reference key="1">
    <citation type="submission" date="2008-02" db="EMBL/GenBank/DDBJ databases">
        <title>Complete sequence of chromosome of Methylobacterium sp. 4-46.</title>
        <authorList>
            <consortium name="US DOE Joint Genome Institute"/>
            <person name="Copeland A."/>
            <person name="Lucas S."/>
            <person name="Lapidus A."/>
            <person name="Glavina del Rio T."/>
            <person name="Dalin E."/>
            <person name="Tice H."/>
            <person name="Bruce D."/>
            <person name="Goodwin L."/>
            <person name="Pitluck S."/>
            <person name="Chertkov O."/>
            <person name="Brettin T."/>
            <person name="Detter J.C."/>
            <person name="Han C."/>
            <person name="Kuske C.R."/>
            <person name="Schmutz J."/>
            <person name="Larimer F."/>
            <person name="Land M."/>
            <person name="Hauser L."/>
            <person name="Kyrpides N."/>
            <person name="Ivanova N."/>
            <person name="Marx C.J."/>
            <person name="Richardson P."/>
        </authorList>
    </citation>
    <scope>NUCLEOTIDE SEQUENCE [LARGE SCALE GENOMIC DNA]</scope>
    <source>
        <strain>4-46</strain>
    </source>
</reference>
<protein>
    <recommendedName>
        <fullName evidence="1">Small ribosomal subunit protein bS6</fullName>
    </recommendedName>
    <alternativeName>
        <fullName evidence="3">30S ribosomal protein S6</fullName>
    </alternativeName>
</protein>
<keyword id="KW-0687">Ribonucleoprotein</keyword>
<keyword id="KW-0689">Ribosomal protein</keyword>
<keyword id="KW-0694">RNA-binding</keyword>
<keyword id="KW-0699">rRNA-binding</keyword>
<name>RS6_METS4</name>
<sequence length="134" mass="15575">MALYEHVFLARQDVTSQQVESMIEAYKGVIESNGGKVEKTEMWGVKSLAYRIKKNRKAHFTLLNIDAPPAALAEMERQMRISEDILRFLTIRVDALEGEPSAMMQKRDRDERKDRERGRRRDDDGYVGERNEEG</sequence>
<dbReference type="EMBL" id="CP000943">
    <property type="protein sequence ID" value="ACA17029.1"/>
    <property type="molecule type" value="Genomic_DNA"/>
</dbReference>
<dbReference type="RefSeq" id="WP_012332435.1">
    <property type="nucleotide sequence ID" value="NC_010511.1"/>
</dbReference>
<dbReference type="SMR" id="B0UL29"/>
<dbReference type="STRING" id="426117.M446_2590"/>
<dbReference type="KEGG" id="met:M446_2590"/>
<dbReference type="eggNOG" id="COG0360">
    <property type="taxonomic scope" value="Bacteria"/>
</dbReference>
<dbReference type="HOGENOM" id="CLU_113441_2_0_5"/>
<dbReference type="GO" id="GO:0022627">
    <property type="term" value="C:cytosolic small ribosomal subunit"/>
    <property type="evidence" value="ECO:0007669"/>
    <property type="project" value="TreeGrafter"/>
</dbReference>
<dbReference type="GO" id="GO:0070181">
    <property type="term" value="F:small ribosomal subunit rRNA binding"/>
    <property type="evidence" value="ECO:0007669"/>
    <property type="project" value="TreeGrafter"/>
</dbReference>
<dbReference type="GO" id="GO:0003735">
    <property type="term" value="F:structural constituent of ribosome"/>
    <property type="evidence" value="ECO:0007669"/>
    <property type="project" value="InterPro"/>
</dbReference>
<dbReference type="GO" id="GO:0006412">
    <property type="term" value="P:translation"/>
    <property type="evidence" value="ECO:0007669"/>
    <property type="project" value="UniProtKB-UniRule"/>
</dbReference>
<dbReference type="CDD" id="cd00473">
    <property type="entry name" value="bS6"/>
    <property type="match status" value="1"/>
</dbReference>
<dbReference type="Gene3D" id="3.30.70.60">
    <property type="match status" value="1"/>
</dbReference>
<dbReference type="HAMAP" id="MF_00360">
    <property type="entry name" value="Ribosomal_bS6"/>
    <property type="match status" value="1"/>
</dbReference>
<dbReference type="InterPro" id="IPR000529">
    <property type="entry name" value="Ribosomal_bS6"/>
</dbReference>
<dbReference type="InterPro" id="IPR035980">
    <property type="entry name" value="Ribosomal_bS6_sf"/>
</dbReference>
<dbReference type="InterPro" id="IPR020814">
    <property type="entry name" value="Ribosomal_S6_plastid/chlpt"/>
</dbReference>
<dbReference type="InterPro" id="IPR014717">
    <property type="entry name" value="Transl_elong_EF1B/ribsomal_bS6"/>
</dbReference>
<dbReference type="NCBIfam" id="TIGR00166">
    <property type="entry name" value="S6"/>
    <property type="match status" value="1"/>
</dbReference>
<dbReference type="PANTHER" id="PTHR21011">
    <property type="entry name" value="MITOCHONDRIAL 28S RIBOSOMAL PROTEIN S6"/>
    <property type="match status" value="1"/>
</dbReference>
<dbReference type="PANTHER" id="PTHR21011:SF1">
    <property type="entry name" value="SMALL RIBOSOMAL SUBUNIT PROTEIN BS6M"/>
    <property type="match status" value="1"/>
</dbReference>
<dbReference type="Pfam" id="PF01250">
    <property type="entry name" value="Ribosomal_S6"/>
    <property type="match status" value="1"/>
</dbReference>
<dbReference type="SUPFAM" id="SSF54995">
    <property type="entry name" value="Ribosomal protein S6"/>
    <property type="match status" value="1"/>
</dbReference>
<comment type="function">
    <text evidence="1">Binds together with bS18 to 16S ribosomal RNA.</text>
</comment>
<comment type="similarity">
    <text evidence="1">Belongs to the bacterial ribosomal protein bS6 family.</text>
</comment>
<gene>
    <name evidence="1" type="primary">rpsF</name>
    <name type="ordered locus">M446_2590</name>
</gene>